<comment type="function">
    <text evidence="1">One of the primary rRNA binding proteins, it binds directly to 16S rRNA where it helps nucleate assembly of the platform of the 30S subunit by binding and bridging several RNA helices of the 16S rRNA.</text>
</comment>
<comment type="function">
    <text evidence="1">Forms an intersubunit bridge (bridge B4) with the 23S rRNA of the 50S subunit in the ribosome.</text>
</comment>
<comment type="subunit">
    <text evidence="1">Part of the 30S ribosomal subunit. Forms a bridge to the 50S subunit in the 70S ribosome, contacting the 23S rRNA.</text>
</comment>
<comment type="similarity">
    <text evidence="1">Belongs to the universal ribosomal protein uS15 family.</text>
</comment>
<reference key="1">
    <citation type="journal article" date="2011" name="J. Bacteriol.">
        <title>Genome sequence of lineage III Listeria monocytogenes strain HCC23.</title>
        <authorList>
            <person name="Steele C.L."/>
            <person name="Donaldson J.R."/>
            <person name="Paul D."/>
            <person name="Banes M.M."/>
            <person name="Arick T."/>
            <person name="Bridges S.M."/>
            <person name="Lawrence M.L."/>
        </authorList>
    </citation>
    <scope>NUCLEOTIDE SEQUENCE [LARGE SCALE GENOMIC DNA]</scope>
    <source>
        <strain>HCC23</strain>
    </source>
</reference>
<evidence type="ECO:0000255" key="1">
    <source>
        <dbReference type="HAMAP-Rule" id="MF_01343"/>
    </source>
</evidence>
<evidence type="ECO:0000305" key="2"/>
<gene>
    <name evidence="1" type="primary">rpsO</name>
    <name type="ordered locus">LMHCC_1240</name>
</gene>
<organism>
    <name type="scientific">Listeria monocytogenes serotype 4a (strain HCC23)</name>
    <dbReference type="NCBI Taxonomy" id="552536"/>
    <lineage>
        <taxon>Bacteria</taxon>
        <taxon>Bacillati</taxon>
        <taxon>Bacillota</taxon>
        <taxon>Bacilli</taxon>
        <taxon>Bacillales</taxon>
        <taxon>Listeriaceae</taxon>
        <taxon>Listeria</taxon>
    </lineage>
</organism>
<protein>
    <recommendedName>
        <fullName evidence="1">Small ribosomal subunit protein uS15</fullName>
    </recommendedName>
    <alternativeName>
        <fullName evidence="2">30S ribosomal protein S15</fullName>
    </alternativeName>
</protein>
<feature type="chain" id="PRO_1000166425" description="Small ribosomal subunit protein uS15">
    <location>
        <begin position="1"/>
        <end position="89"/>
    </location>
</feature>
<dbReference type="EMBL" id="CP001175">
    <property type="protein sequence ID" value="ACK39587.1"/>
    <property type="molecule type" value="Genomic_DNA"/>
</dbReference>
<dbReference type="RefSeq" id="WP_003719603.1">
    <property type="nucleotide sequence ID" value="NC_011660.1"/>
</dbReference>
<dbReference type="SMR" id="B8DFZ7"/>
<dbReference type="GeneID" id="93239206"/>
<dbReference type="KEGG" id="lmh:LMHCC_1240"/>
<dbReference type="HOGENOM" id="CLU_148518_0_0_9"/>
<dbReference type="GO" id="GO:0022627">
    <property type="term" value="C:cytosolic small ribosomal subunit"/>
    <property type="evidence" value="ECO:0007669"/>
    <property type="project" value="TreeGrafter"/>
</dbReference>
<dbReference type="GO" id="GO:0019843">
    <property type="term" value="F:rRNA binding"/>
    <property type="evidence" value="ECO:0007669"/>
    <property type="project" value="UniProtKB-UniRule"/>
</dbReference>
<dbReference type="GO" id="GO:0003735">
    <property type="term" value="F:structural constituent of ribosome"/>
    <property type="evidence" value="ECO:0007669"/>
    <property type="project" value="InterPro"/>
</dbReference>
<dbReference type="GO" id="GO:0006412">
    <property type="term" value="P:translation"/>
    <property type="evidence" value="ECO:0007669"/>
    <property type="project" value="UniProtKB-UniRule"/>
</dbReference>
<dbReference type="CDD" id="cd00353">
    <property type="entry name" value="Ribosomal_S15p_S13e"/>
    <property type="match status" value="1"/>
</dbReference>
<dbReference type="FunFam" id="1.10.287.10:FF:000002">
    <property type="entry name" value="30S ribosomal protein S15"/>
    <property type="match status" value="1"/>
</dbReference>
<dbReference type="Gene3D" id="6.10.250.3130">
    <property type="match status" value="1"/>
</dbReference>
<dbReference type="Gene3D" id="1.10.287.10">
    <property type="entry name" value="S15/NS1, RNA-binding"/>
    <property type="match status" value="1"/>
</dbReference>
<dbReference type="HAMAP" id="MF_01343_B">
    <property type="entry name" value="Ribosomal_uS15_B"/>
    <property type="match status" value="1"/>
</dbReference>
<dbReference type="InterPro" id="IPR000589">
    <property type="entry name" value="Ribosomal_uS15"/>
</dbReference>
<dbReference type="InterPro" id="IPR005290">
    <property type="entry name" value="Ribosomal_uS15_bac-type"/>
</dbReference>
<dbReference type="InterPro" id="IPR009068">
    <property type="entry name" value="uS15_NS1_RNA-bd_sf"/>
</dbReference>
<dbReference type="NCBIfam" id="TIGR00952">
    <property type="entry name" value="S15_bact"/>
    <property type="match status" value="1"/>
</dbReference>
<dbReference type="PANTHER" id="PTHR23321">
    <property type="entry name" value="RIBOSOMAL PROTEIN S15, BACTERIAL AND ORGANELLAR"/>
    <property type="match status" value="1"/>
</dbReference>
<dbReference type="PANTHER" id="PTHR23321:SF26">
    <property type="entry name" value="SMALL RIBOSOMAL SUBUNIT PROTEIN US15M"/>
    <property type="match status" value="1"/>
</dbReference>
<dbReference type="Pfam" id="PF00312">
    <property type="entry name" value="Ribosomal_S15"/>
    <property type="match status" value="1"/>
</dbReference>
<dbReference type="SMART" id="SM01387">
    <property type="entry name" value="Ribosomal_S15"/>
    <property type="match status" value="1"/>
</dbReference>
<dbReference type="SUPFAM" id="SSF47060">
    <property type="entry name" value="S15/NS1 RNA-binding domain"/>
    <property type="match status" value="1"/>
</dbReference>
<dbReference type="PROSITE" id="PS00362">
    <property type="entry name" value="RIBOSOMAL_S15"/>
    <property type="match status" value="1"/>
</dbReference>
<name>RS15_LISMH</name>
<proteinExistence type="inferred from homology"/>
<accession>B8DFZ7</accession>
<keyword id="KW-0687">Ribonucleoprotein</keyword>
<keyword id="KW-0689">Ribosomal protein</keyword>
<keyword id="KW-0694">RNA-binding</keyword>
<keyword id="KW-0699">rRNA-binding</keyword>
<sequence>MALTQERKNEIIAEYRVHDTDTGSPEVQIAVLTAEINSLNEHVRVHKKDHHSYRGLMKMVGHRRNLLTYLRKKDVQRYRELIKRLGLRR</sequence>